<keyword id="KW-0030">Aminoacyl-tRNA synthetase</keyword>
<keyword id="KW-0067">ATP-binding</keyword>
<keyword id="KW-0963">Cytoplasm</keyword>
<keyword id="KW-0436">Ligase</keyword>
<keyword id="KW-0547">Nucleotide-binding</keyword>
<keyword id="KW-0648">Protein biosynthesis</keyword>
<organism>
    <name type="scientific">Nitratidesulfovibrio vulgaris (strain DP4)</name>
    <name type="common">Desulfovibrio vulgaris</name>
    <dbReference type="NCBI Taxonomy" id="391774"/>
    <lineage>
        <taxon>Bacteria</taxon>
        <taxon>Pseudomonadati</taxon>
        <taxon>Thermodesulfobacteriota</taxon>
        <taxon>Desulfovibrionia</taxon>
        <taxon>Desulfovibrionales</taxon>
        <taxon>Desulfovibrionaceae</taxon>
        <taxon>Nitratidesulfovibrio</taxon>
    </lineage>
</organism>
<sequence length="463" mass="51525">MSNVVTRFAPSPTGHLHIGGARTAIFNWLLARHFGGRFVLRIEDTDTERSKQEYTDSILASMKWLGLDWDGDLIYQSERFDIYNSYIDRLLESGHAYWCECPPDEVEKMREEARAKGLKPRYNGRCRSRDLGPGDGRVVRLKAPAEGRIVFDDLVKGTVAFDVAELDDMVLRRSDGAPTYNLAVVVDDATMGVTHVLRGDDHLSNTPKQILLYQALGFDLPRFGHVPMILGPDRKKLSKRHGAKAVIEYEQYGLLPQALVNYLVRLGWSHGDQEIFALEELVEKFGTENLNSSAAGFDPDKLEWLNGHYLRETSPEELARLVLPFVAAEGFDVDASRLAQLVPLFRERANNLVELARVMRFMLVPAAEVEYDAAAVAKALTEEGRRHVAGVREALAVLGIFDREGCEKAIHDYVEGNGLKFKQVAPAVRVAVVGAMGGPGLPDMMALLGRDDVLARLDRAVAL</sequence>
<dbReference type="EC" id="6.1.1.17" evidence="1"/>
<dbReference type="EMBL" id="CP000527">
    <property type="protein sequence ID" value="ABM27719.1"/>
    <property type="molecule type" value="Genomic_DNA"/>
</dbReference>
<dbReference type="RefSeq" id="WP_011791780.1">
    <property type="nucleotide sequence ID" value="NC_008751.1"/>
</dbReference>
<dbReference type="SMR" id="A1VBA3"/>
<dbReference type="KEGG" id="dvl:Dvul_0696"/>
<dbReference type="HOGENOM" id="CLU_015768_6_3_7"/>
<dbReference type="Proteomes" id="UP000009173">
    <property type="component" value="Chromosome"/>
</dbReference>
<dbReference type="GO" id="GO:0005829">
    <property type="term" value="C:cytosol"/>
    <property type="evidence" value="ECO:0007669"/>
    <property type="project" value="TreeGrafter"/>
</dbReference>
<dbReference type="GO" id="GO:0005524">
    <property type="term" value="F:ATP binding"/>
    <property type="evidence" value="ECO:0007669"/>
    <property type="project" value="UniProtKB-UniRule"/>
</dbReference>
<dbReference type="GO" id="GO:0004818">
    <property type="term" value="F:glutamate-tRNA ligase activity"/>
    <property type="evidence" value="ECO:0007669"/>
    <property type="project" value="UniProtKB-UniRule"/>
</dbReference>
<dbReference type="GO" id="GO:0000049">
    <property type="term" value="F:tRNA binding"/>
    <property type="evidence" value="ECO:0007669"/>
    <property type="project" value="InterPro"/>
</dbReference>
<dbReference type="GO" id="GO:0008270">
    <property type="term" value="F:zinc ion binding"/>
    <property type="evidence" value="ECO:0007669"/>
    <property type="project" value="UniProtKB-UniRule"/>
</dbReference>
<dbReference type="GO" id="GO:0006424">
    <property type="term" value="P:glutamyl-tRNA aminoacylation"/>
    <property type="evidence" value="ECO:0007669"/>
    <property type="project" value="UniProtKB-UniRule"/>
</dbReference>
<dbReference type="CDD" id="cd00808">
    <property type="entry name" value="GluRS_core"/>
    <property type="match status" value="1"/>
</dbReference>
<dbReference type="FunFam" id="3.40.50.620:FF:000007">
    <property type="entry name" value="Glutamate--tRNA ligase"/>
    <property type="match status" value="1"/>
</dbReference>
<dbReference type="Gene3D" id="1.10.10.350">
    <property type="match status" value="1"/>
</dbReference>
<dbReference type="Gene3D" id="3.40.50.620">
    <property type="entry name" value="HUPs"/>
    <property type="match status" value="1"/>
</dbReference>
<dbReference type="HAMAP" id="MF_00022">
    <property type="entry name" value="Glu_tRNA_synth_type1"/>
    <property type="match status" value="1"/>
</dbReference>
<dbReference type="InterPro" id="IPR045462">
    <property type="entry name" value="aa-tRNA-synth_I_cd-bd"/>
</dbReference>
<dbReference type="InterPro" id="IPR020751">
    <property type="entry name" value="aa-tRNA-synth_I_codon-bd_sub2"/>
</dbReference>
<dbReference type="InterPro" id="IPR001412">
    <property type="entry name" value="aa-tRNA-synth_I_CS"/>
</dbReference>
<dbReference type="InterPro" id="IPR008925">
    <property type="entry name" value="aa_tRNA-synth_I_cd-bd_sf"/>
</dbReference>
<dbReference type="InterPro" id="IPR004527">
    <property type="entry name" value="Glu-tRNA-ligase_bac/mito"/>
</dbReference>
<dbReference type="InterPro" id="IPR000924">
    <property type="entry name" value="Glu/Gln-tRNA-synth"/>
</dbReference>
<dbReference type="InterPro" id="IPR020058">
    <property type="entry name" value="Glu/Gln-tRNA-synth_Ib_cat-dom"/>
</dbReference>
<dbReference type="InterPro" id="IPR049940">
    <property type="entry name" value="GluQ/Sye"/>
</dbReference>
<dbReference type="InterPro" id="IPR033910">
    <property type="entry name" value="GluRS_core"/>
</dbReference>
<dbReference type="InterPro" id="IPR014729">
    <property type="entry name" value="Rossmann-like_a/b/a_fold"/>
</dbReference>
<dbReference type="NCBIfam" id="TIGR00464">
    <property type="entry name" value="gltX_bact"/>
    <property type="match status" value="1"/>
</dbReference>
<dbReference type="NCBIfam" id="NF004314">
    <property type="entry name" value="PRK05710.1-3"/>
    <property type="match status" value="1"/>
</dbReference>
<dbReference type="PANTHER" id="PTHR43311">
    <property type="entry name" value="GLUTAMATE--TRNA LIGASE"/>
    <property type="match status" value="1"/>
</dbReference>
<dbReference type="PANTHER" id="PTHR43311:SF2">
    <property type="entry name" value="GLUTAMATE--TRNA LIGASE, MITOCHONDRIAL-RELATED"/>
    <property type="match status" value="1"/>
</dbReference>
<dbReference type="Pfam" id="PF19269">
    <property type="entry name" value="Anticodon_2"/>
    <property type="match status" value="1"/>
</dbReference>
<dbReference type="Pfam" id="PF00749">
    <property type="entry name" value="tRNA-synt_1c"/>
    <property type="match status" value="1"/>
</dbReference>
<dbReference type="PRINTS" id="PR00987">
    <property type="entry name" value="TRNASYNTHGLU"/>
</dbReference>
<dbReference type="SUPFAM" id="SSF48163">
    <property type="entry name" value="An anticodon-binding domain of class I aminoacyl-tRNA synthetases"/>
    <property type="match status" value="1"/>
</dbReference>
<dbReference type="SUPFAM" id="SSF52374">
    <property type="entry name" value="Nucleotidylyl transferase"/>
    <property type="match status" value="1"/>
</dbReference>
<dbReference type="PROSITE" id="PS00178">
    <property type="entry name" value="AA_TRNA_LIGASE_I"/>
    <property type="match status" value="1"/>
</dbReference>
<comment type="function">
    <text evidence="1">Catalyzes the attachment of glutamate to tRNA(Glu) in a two-step reaction: glutamate is first activated by ATP to form Glu-AMP and then transferred to the acceptor end of tRNA(Glu).</text>
</comment>
<comment type="catalytic activity">
    <reaction evidence="1">
        <text>tRNA(Glu) + L-glutamate + ATP = L-glutamyl-tRNA(Glu) + AMP + diphosphate</text>
        <dbReference type="Rhea" id="RHEA:23540"/>
        <dbReference type="Rhea" id="RHEA-COMP:9663"/>
        <dbReference type="Rhea" id="RHEA-COMP:9680"/>
        <dbReference type="ChEBI" id="CHEBI:29985"/>
        <dbReference type="ChEBI" id="CHEBI:30616"/>
        <dbReference type="ChEBI" id="CHEBI:33019"/>
        <dbReference type="ChEBI" id="CHEBI:78442"/>
        <dbReference type="ChEBI" id="CHEBI:78520"/>
        <dbReference type="ChEBI" id="CHEBI:456215"/>
        <dbReference type="EC" id="6.1.1.17"/>
    </reaction>
</comment>
<comment type="subunit">
    <text evidence="1">Monomer.</text>
</comment>
<comment type="subcellular location">
    <subcellularLocation>
        <location evidence="1">Cytoplasm</location>
    </subcellularLocation>
</comment>
<comment type="similarity">
    <text evidence="1">Belongs to the class-I aminoacyl-tRNA synthetase family. Glutamate--tRNA ligase type 1 subfamily.</text>
</comment>
<reference key="1">
    <citation type="journal article" date="2009" name="Environ. Microbiol.">
        <title>Contribution of mobile genetic elements to Desulfovibrio vulgaris genome plasticity.</title>
        <authorList>
            <person name="Walker C.B."/>
            <person name="Stolyar S."/>
            <person name="Chivian D."/>
            <person name="Pinel N."/>
            <person name="Gabster J.A."/>
            <person name="Dehal P.S."/>
            <person name="He Z."/>
            <person name="Yang Z.K."/>
            <person name="Yen H.C."/>
            <person name="Zhou J."/>
            <person name="Wall J.D."/>
            <person name="Hazen T.C."/>
            <person name="Arkin A.P."/>
            <person name="Stahl D.A."/>
        </authorList>
    </citation>
    <scope>NUCLEOTIDE SEQUENCE [LARGE SCALE GENOMIC DNA]</scope>
    <source>
        <strain>DP4</strain>
    </source>
</reference>
<proteinExistence type="inferred from homology"/>
<gene>
    <name evidence="1" type="primary">gltX</name>
    <name type="ordered locus">Dvul_0696</name>
</gene>
<accession>A1VBA3</accession>
<evidence type="ECO:0000255" key="1">
    <source>
        <dbReference type="HAMAP-Rule" id="MF_00022"/>
    </source>
</evidence>
<name>SYE_NITV4</name>
<feature type="chain" id="PRO_1000001894" description="Glutamate--tRNA ligase">
    <location>
        <begin position="1"/>
        <end position="463"/>
    </location>
</feature>
<feature type="short sequence motif" description="'HIGH' region" evidence="1">
    <location>
        <begin position="10"/>
        <end position="20"/>
    </location>
</feature>
<feature type="short sequence motif" description="'KMSKS' region" evidence="1">
    <location>
        <begin position="236"/>
        <end position="240"/>
    </location>
</feature>
<feature type="binding site" evidence="1">
    <location>
        <position position="239"/>
    </location>
    <ligand>
        <name>ATP</name>
        <dbReference type="ChEBI" id="CHEBI:30616"/>
    </ligand>
</feature>
<protein>
    <recommendedName>
        <fullName evidence="1">Glutamate--tRNA ligase</fullName>
        <ecNumber evidence="1">6.1.1.17</ecNumber>
    </recommendedName>
    <alternativeName>
        <fullName evidence="1">Glutamyl-tRNA synthetase</fullName>
        <shortName evidence="1">GluRS</shortName>
    </alternativeName>
</protein>